<proteinExistence type="inferred from homology"/>
<protein>
    <recommendedName>
        <fullName>Pyruvate kinase</fullName>
        <shortName>PK</shortName>
        <ecNumber>2.7.1.40</ecNumber>
    </recommendedName>
</protein>
<gene>
    <name type="primary">pykA</name>
    <name type="ordered locus">bbp_297</name>
</gene>
<accession>Q89AI8</accession>
<organism>
    <name type="scientific">Buchnera aphidicola subsp. Baizongia pistaciae (strain Bp)</name>
    <dbReference type="NCBI Taxonomy" id="224915"/>
    <lineage>
        <taxon>Bacteria</taxon>
        <taxon>Pseudomonadati</taxon>
        <taxon>Pseudomonadota</taxon>
        <taxon>Gammaproteobacteria</taxon>
        <taxon>Enterobacterales</taxon>
        <taxon>Erwiniaceae</taxon>
        <taxon>Buchnera</taxon>
    </lineage>
</organism>
<reference key="1">
    <citation type="journal article" date="2003" name="Proc. Natl. Acad. Sci. U.S.A.">
        <title>Reductive genome evolution in Buchnera aphidicola.</title>
        <authorList>
            <person name="van Ham R.C.H.J."/>
            <person name="Kamerbeek J."/>
            <person name="Palacios C."/>
            <person name="Rausell C."/>
            <person name="Abascal F."/>
            <person name="Bastolla U."/>
            <person name="Fernandez J.M."/>
            <person name="Jimenez L."/>
            <person name="Postigo M."/>
            <person name="Silva F.J."/>
            <person name="Tamames J."/>
            <person name="Viguera E."/>
            <person name="Latorre A."/>
            <person name="Valencia A."/>
            <person name="Moran F."/>
            <person name="Moya A."/>
        </authorList>
    </citation>
    <scope>NUCLEOTIDE SEQUENCE [LARGE SCALE GENOMIC DNA]</scope>
    <source>
        <strain>Bp</strain>
    </source>
</reference>
<evidence type="ECO:0000250" key="1"/>
<evidence type="ECO:0000250" key="2">
    <source>
        <dbReference type="UniProtKB" id="P14618"/>
    </source>
</evidence>
<evidence type="ECO:0000305" key="3"/>
<sequence>MIRRFRRTKIVATLGPSTDNHIILENMIKSGVNVFRLNFSHGTREEHIYRAKLVTSIAKRLNCHIALLGDLQGPKIRICKFQDKKVFLKVNNYFILDANLNENLGTSERVGIDYKNLPKDVKKCDILLLDDGKIQLKVINIVDQEIFTKIIIGGVLSNNKGINKLGGGLSARILTKKDKRDIITSIDIGVDYLAVSFPRYGSDLDHARKCAVKFGSKAKIIAKIERAEAVKDLKIIDEIILASDAIMVARGDLGVEIGESELAGIQKTLIRRARQLNRVVITATQMMESMINNPMPTRAEVMDVANAVLDGSDAVMLSAETASGKYPIETIKVMSKVCMGAEKMPSINVSQHRIHDKFHDIEEAIAMSAMYAANHLSGITAIITMTESGKTSLMTSRITSGLPIFALSSHIQTLKLTALYRGVTPIFFNSSKEGVSAANEVINLLVKRGFLEPGNLVIITQGDIMGKVGKTNTSRILKV</sequence>
<comment type="catalytic activity">
    <reaction>
        <text>pyruvate + ATP = phosphoenolpyruvate + ADP + H(+)</text>
        <dbReference type="Rhea" id="RHEA:18157"/>
        <dbReference type="ChEBI" id="CHEBI:15361"/>
        <dbReference type="ChEBI" id="CHEBI:15378"/>
        <dbReference type="ChEBI" id="CHEBI:30616"/>
        <dbReference type="ChEBI" id="CHEBI:58702"/>
        <dbReference type="ChEBI" id="CHEBI:456216"/>
        <dbReference type="EC" id="2.7.1.40"/>
    </reaction>
</comment>
<comment type="cofactor">
    <cofactor evidence="1">
        <name>Mg(2+)</name>
        <dbReference type="ChEBI" id="CHEBI:18420"/>
    </cofactor>
</comment>
<comment type="cofactor">
    <cofactor evidence="1">
        <name>K(+)</name>
        <dbReference type="ChEBI" id="CHEBI:29103"/>
    </cofactor>
</comment>
<comment type="activity regulation">
    <text evidence="1">Allosterically activated by AMP and by several sugar phosphates. Belongs to type II PK (By similarity).</text>
</comment>
<comment type="pathway">
    <text>Carbohydrate degradation; glycolysis; pyruvate from D-glyceraldehyde 3-phosphate: step 5/5.</text>
</comment>
<comment type="subunit">
    <text evidence="1">Homotetramer.</text>
</comment>
<comment type="similarity">
    <text evidence="3">Belongs to the pyruvate kinase family.</text>
</comment>
<dbReference type="EC" id="2.7.1.40"/>
<dbReference type="EMBL" id="AE016826">
    <property type="protein sequence ID" value="AAO27022.1"/>
    <property type="molecule type" value="Genomic_DNA"/>
</dbReference>
<dbReference type="RefSeq" id="WP_011091423.1">
    <property type="nucleotide sequence ID" value="NC_004545.1"/>
</dbReference>
<dbReference type="SMR" id="Q89AI8"/>
<dbReference type="STRING" id="224915.bbp_297"/>
<dbReference type="KEGG" id="bab:bbp_297"/>
<dbReference type="eggNOG" id="COG0469">
    <property type="taxonomic scope" value="Bacteria"/>
</dbReference>
<dbReference type="HOGENOM" id="CLU_015439_0_2_6"/>
<dbReference type="OrthoDB" id="9812123at2"/>
<dbReference type="UniPathway" id="UPA00109">
    <property type="reaction ID" value="UER00188"/>
</dbReference>
<dbReference type="Proteomes" id="UP000000601">
    <property type="component" value="Chromosome"/>
</dbReference>
<dbReference type="GO" id="GO:0005524">
    <property type="term" value="F:ATP binding"/>
    <property type="evidence" value="ECO:0007669"/>
    <property type="project" value="UniProtKB-KW"/>
</dbReference>
<dbReference type="GO" id="GO:0016301">
    <property type="term" value="F:kinase activity"/>
    <property type="evidence" value="ECO:0007669"/>
    <property type="project" value="UniProtKB-KW"/>
</dbReference>
<dbReference type="GO" id="GO:0000287">
    <property type="term" value="F:magnesium ion binding"/>
    <property type="evidence" value="ECO:0007669"/>
    <property type="project" value="InterPro"/>
</dbReference>
<dbReference type="GO" id="GO:0030955">
    <property type="term" value="F:potassium ion binding"/>
    <property type="evidence" value="ECO:0007669"/>
    <property type="project" value="InterPro"/>
</dbReference>
<dbReference type="GO" id="GO:0004743">
    <property type="term" value="F:pyruvate kinase activity"/>
    <property type="evidence" value="ECO:0007669"/>
    <property type="project" value="UniProtKB-EC"/>
</dbReference>
<dbReference type="FunFam" id="3.40.1380.20:FF:000004">
    <property type="entry name" value="Pyruvate kinase"/>
    <property type="match status" value="1"/>
</dbReference>
<dbReference type="Gene3D" id="3.20.20.60">
    <property type="entry name" value="Phosphoenolpyruvate-binding domains"/>
    <property type="match status" value="1"/>
</dbReference>
<dbReference type="Gene3D" id="2.40.33.10">
    <property type="entry name" value="PK beta-barrel domain-like"/>
    <property type="match status" value="1"/>
</dbReference>
<dbReference type="Gene3D" id="3.40.1380.20">
    <property type="entry name" value="Pyruvate kinase, C-terminal domain"/>
    <property type="match status" value="1"/>
</dbReference>
<dbReference type="InterPro" id="IPR001697">
    <property type="entry name" value="Pyr_Knase"/>
</dbReference>
<dbReference type="InterPro" id="IPR015813">
    <property type="entry name" value="Pyrv/PenolPyrv_kinase-like_dom"/>
</dbReference>
<dbReference type="InterPro" id="IPR040442">
    <property type="entry name" value="Pyrv_kinase-like_dom_sf"/>
</dbReference>
<dbReference type="InterPro" id="IPR011037">
    <property type="entry name" value="Pyrv_Knase-like_insert_dom_sf"/>
</dbReference>
<dbReference type="InterPro" id="IPR018209">
    <property type="entry name" value="Pyrv_Knase_AS"/>
</dbReference>
<dbReference type="InterPro" id="IPR015793">
    <property type="entry name" value="Pyrv_Knase_brl"/>
</dbReference>
<dbReference type="InterPro" id="IPR015795">
    <property type="entry name" value="Pyrv_Knase_C"/>
</dbReference>
<dbReference type="InterPro" id="IPR036918">
    <property type="entry name" value="Pyrv_Knase_C_sf"/>
</dbReference>
<dbReference type="InterPro" id="IPR015806">
    <property type="entry name" value="Pyrv_Knase_insert_dom_sf"/>
</dbReference>
<dbReference type="NCBIfam" id="NF004491">
    <property type="entry name" value="PRK05826.1"/>
    <property type="match status" value="1"/>
</dbReference>
<dbReference type="NCBIfam" id="TIGR01064">
    <property type="entry name" value="pyruv_kin"/>
    <property type="match status" value="1"/>
</dbReference>
<dbReference type="PANTHER" id="PTHR11817">
    <property type="entry name" value="PYRUVATE KINASE"/>
    <property type="match status" value="1"/>
</dbReference>
<dbReference type="Pfam" id="PF00224">
    <property type="entry name" value="PK"/>
    <property type="match status" value="1"/>
</dbReference>
<dbReference type="Pfam" id="PF02887">
    <property type="entry name" value="PK_C"/>
    <property type="match status" value="1"/>
</dbReference>
<dbReference type="PRINTS" id="PR01050">
    <property type="entry name" value="PYRUVTKNASE"/>
</dbReference>
<dbReference type="SUPFAM" id="SSF51621">
    <property type="entry name" value="Phosphoenolpyruvate/pyruvate domain"/>
    <property type="match status" value="1"/>
</dbReference>
<dbReference type="SUPFAM" id="SSF50800">
    <property type="entry name" value="PK beta-barrel domain-like"/>
    <property type="match status" value="1"/>
</dbReference>
<dbReference type="SUPFAM" id="SSF52935">
    <property type="entry name" value="PK C-terminal domain-like"/>
    <property type="match status" value="1"/>
</dbReference>
<dbReference type="PROSITE" id="PS00110">
    <property type="entry name" value="PYRUVATE_KINASE"/>
    <property type="match status" value="1"/>
</dbReference>
<feature type="chain" id="PRO_0000112060" description="Pyruvate kinase">
    <location>
        <begin position="1"/>
        <end position="479"/>
    </location>
</feature>
<feature type="binding site" evidence="1">
    <location>
        <position position="36"/>
    </location>
    <ligand>
        <name>substrate</name>
    </ligand>
</feature>
<feature type="binding site" evidence="2">
    <location>
        <begin position="38"/>
        <end position="41"/>
    </location>
    <ligand>
        <name>ATP</name>
        <dbReference type="ChEBI" id="CHEBI:30616"/>
    </ligand>
</feature>
<feature type="binding site" evidence="1">
    <location>
        <position position="38"/>
    </location>
    <ligand>
        <name>K(+)</name>
        <dbReference type="ChEBI" id="CHEBI:29103"/>
    </ligand>
</feature>
<feature type="binding site" evidence="1">
    <location>
        <position position="40"/>
    </location>
    <ligand>
        <name>K(+)</name>
        <dbReference type="ChEBI" id="CHEBI:29103"/>
    </ligand>
</feature>
<feature type="binding site" evidence="1">
    <location>
        <position position="70"/>
    </location>
    <ligand>
        <name>K(+)</name>
        <dbReference type="ChEBI" id="CHEBI:29103"/>
    </ligand>
</feature>
<feature type="binding site" evidence="2">
    <location>
        <position position="77"/>
    </location>
    <ligand>
        <name>ATP</name>
        <dbReference type="ChEBI" id="CHEBI:30616"/>
    </ligand>
</feature>
<feature type="binding site" evidence="2">
    <location>
        <position position="160"/>
    </location>
    <ligand>
        <name>ATP</name>
        <dbReference type="ChEBI" id="CHEBI:30616"/>
    </ligand>
</feature>
<feature type="binding site" evidence="1">
    <location>
        <position position="225"/>
    </location>
    <ligand>
        <name>Mg(2+)</name>
        <dbReference type="ChEBI" id="CHEBI:18420"/>
    </ligand>
</feature>
<feature type="binding site" evidence="1">
    <location>
        <position position="251"/>
    </location>
    <ligand>
        <name>substrate</name>
    </ligand>
</feature>
<feature type="binding site" evidence="1">
    <location>
        <position position="252"/>
    </location>
    <ligand>
        <name>Mg(2+)</name>
        <dbReference type="ChEBI" id="CHEBI:18420"/>
    </ligand>
</feature>
<feature type="binding site" evidence="1">
    <location>
        <position position="252"/>
    </location>
    <ligand>
        <name>substrate</name>
    </ligand>
</feature>
<feature type="binding site" evidence="1">
    <location>
        <position position="284"/>
    </location>
    <ligand>
        <name>substrate</name>
    </ligand>
</feature>
<feature type="site" description="Transition state stabilizer" evidence="1">
    <location>
        <position position="223"/>
    </location>
</feature>
<keyword id="KW-0021">Allosteric enzyme</keyword>
<keyword id="KW-0067">ATP-binding</keyword>
<keyword id="KW-0324">Glycolysis</keyword>
<keyword id="KW-0418">Kinase</keyword>
<keyword id="KW-0460">Magnesium</keyword>
<keyword id="KW-0479">Metal-binding</keyword>
<keyword id="KW-0547">Nucleotide-binding</keyword>
<keyword id="KW-0630">Potassium</keyword>
<keyword id="KW-0670">Pyruvate</keyword>
<keyword id="KW-1185">Reference proteome</keyword>
<keyword id="KW-0808">Transferase</keyword>
<name>KPYK_BUCBP</name>